<reference key="1">
    <citation type="journal article" date="1992" name="J. Mol. Biol.">
        <title>Extreme divergence of a novel wheat thionin generated by a mutational burst specifically affecting the mature protein domain of the precursor.</title>
        <authorList>
            <person name="Castagnaro A."/>
            <person name="Marana C."/>
            <person name="Carbonero P."/>
            <person name="Garcia-Olmedo F."/>
        </authorList>
    </citation>
    <scope>NUCLEOTIDE SEQUENCE [GENOMIC DNA / MRNA]</scope>
    <source>
        <strain>cv. Chinese Spring</strain>
        <tissue>Endosperm</tissue>
    </source>
</reference>
<dbReference type="EMBL" id="X61670">
    <property type="protein sequence ID" value="CAA43844.1"/>
    <property type="molecule type" value="mRNA"/>
</dbReference>
<dbReference type="EMBL" id="X61671">
    <property type="protein sequence ID" value="CAA43845.1"/>
    <property type="molecule type" value="Genomic_DNA"/>
</dbReference>
<dbReference type="PIR" id="S23511">
    <property type="entry name" value="S23511"/>
</dbReference>
<dbReference type="RefSeq" id="NP_001392707.1">
    <property type="nucleotide sequence ID" value="NM_001405778.1"/>
</dbReference>
<dbReference type="PaxDb" id="4565-Traes_1DL_D76EB8F27.1"/>
<dbReference type="EnsemblPlants" id="TraesARI1D03G00568920.2">
    <property type="protein sequence ID" value="TraesARI1D03G00568920.2"/>
    <property type="gene ID" value="TraesARI1D03G00568920"/>
</dbReference>
<dbReference type="EnsemblPlants" id="TraesCAD_scaffold_059422_01G000600.1">
    <property type="protein sequence ID" value="TraesCAD_scaffold_059422_01G000600.1"/>
    <property type="gene ID" value="TraesCAD_scaffold_059422_01G000600"/>
</dbReference>
<dbReference type="EnsemblPlants" id="TraesCLE_scaffold_055580_01G000700.1">
    <property type="protein sequence ID" value="TraesCLE_scaffold_055580_01G000700.1"/>
    <property type="gene ID" value="TraesCLE_scaffold_055580_01G000700"/>
</dbReference>
<dbReference type="EnsemblPlants" id="TraesCS1D02G405600.1">
    <property type="protein sequence ID" value="TraesCS1D02G405600.1"/>
    <property type="gene ID" value="TraesCS1D02G405600"/>
</dbReference>
<dbReference type="EnsemblPlants" id="TraesCS1D03G0943200.1">
    <property type="protein sequence ID" value="TraesCS1D03G0943200.1.CDS"/>
    <property type="gene ID" value="TraesCS1D03G0943200"/>
</dbReference>
<dbReference type="EnsemblPlants" id="TraesJAG1D03G00561940.1">
    <property type="protein sequence ID" value="TraesJAG1D03G00561940.1"/>
    <property type="gene ID" value="TraesJAG1D03G00561940"/>
</dbReference>
<dbReference type="EnsemblPlants" id="TraesJUL1D03G00565560.1">
    <property type="protein sequence ID" value="TraesJUL1D03G00565560.1"/>
    <property type="gene ID" value="TraesJUL1D03G00565560"/>
</dbReference>
<dbReference type="EnsemblPlants" id="TraesKAR1D01G0340710.1">
    <property type="protein sequence ID" value="cds.TraesKAR1D01G0340710.1"/>
    <property type="gene ID" value="TraesKAR1D01G0340710"/>
</dbReference>
<dbReference type="EnsemblPlants" id="TraesLAC1D03G00566420.1">
    <property type="protein sequence ID" value="TraesLAC1D03G00566420.1"/>
    <property type="gene ID" value="TraesLAC1D03G00566420"/>
</dbReference>
<dbReference type="EnsemblPlants" id="TraesLDM1D03G00564810.1">
    <property type="protein sequence ID" value="TraesLDM1D03G00564810.1"/>
    <property type="gene ID" value="TraesLDM1D03G00564810"/>
</dbReference>
<dbReference type="EnsemblPlants" id="TraesMAC1D03G00562070.1">
    <property type="protein sequence ID" value="TraesMAC1D03G00562070.1"/>
    <property type="gene ID" value="TraesMAC1D03G00562070"/>
</dbReference>
<dbReference type="EnsemblPlants" id="TraesNOR1D03G00570550.2">
    <property type="protein sequence ID" value="TraesNOR1D03G00570550.2"/>
    <property type="gene ID" value="TraesNOR1D03G00570550"/>
</dbReference>
<dbReference type="EnsemblPlants" id="TraesPARA_EIv1.0_0319500.1">
    <property type="protein sequence ID" value="TraesPARA_EIv1.0_0319500.1.CDS"/>
    <property type="gene ID" value="TraesPARA_EIv1.0_0319500"/>
</dbReference>
<dbReference type="EnsemblPlants" id="TraesRN1D0100998000.1">
    <property type="protein sequence ID" value="TraesRN1D0100998000.1"/>
    <property type="gene ID" value="TraesRN1D0100998000"/>
</dbReference>
<dbReference type="EnsemblPlants" id="TraesROB_scaffold_057461_01G000700.1">
    <property type="protein sequence ID" value="TraesROB_scaffold_057461_01G000700.1"/>
    <property type="gene ID" value="TraesROB_scaffold_057461_01G000700"/>
</dbReference>
<dbReference type="EnsemblPlants" id="TraesSTA1D03G00561620.1">
    <property type="protein sequence ID" value="TraesSTA1D03G00561620.1"/>
    <property type="gene ID" value="TraesSTA1D03G00561620"/>
</dbReference>
<dbReference type="EnsemblPlants" id="TraesSYM1D03G00569720.1">
    <property type="protein sequence ID" value="TraesSYM1D03G00569720.1"/>
    <property type="gene ID" value="TraesSYM1D03G00569720"/>
</dbReference>
<dbReference type="EnsemblPlants" id="TraesWEE_scaffold_055449_01G000100.1">
    <property type="protein sequence ID" value="TraesWEE_scaffold_055449_01G000100.1"/>
    <property type="gene ID" value="TraesWEE_scaffold_055449_01G000100"/>
</dbReference>
<dbReference type="GeneID" id="543295"/>
<dbReference type="Gramene" id="TraesARI1D03G00568920.2">
    <property type="protein sequence ID" value="TraesARI1D03G00568920.2"/>
    <property type="gene ID" value="TraesARI1D03G00568920"/>
</dbReference>
<dbReference type="Gramene" id="TraesCAD_scaffold_059422_01G000600.1">
    <property type="protein sequence ID" value="TraesCAD_scaffold_059422_01G000600.1"/>
    <property type="gene ID" value="TraesCAD_scaffold_059422_01G000600"/>
</dbReference>
<dbReference type="Gramene" id="TraesCLE_scaffold_055580_01G000700.1">
    <property type="protein sequence ID" value="TraesCLE_scaffold_055580_01G000700.1"/>
    <property type="gene ID" value="TraesCLE_scaffold_055580_01G000700"/>
</dbReference>
<dbReference type="Gramene" id="TraesCS1D02G405600.1">
    <property type="protein sequence ID" value="TraesCS1D02G405600.1"/>
    <property type="gene ID" value="TraesCS1D02G405600"/>
</dbReference>
<dbReference type="Gramene" id="TraesCS1D03G0943200.1">
    <property type="protein sequence ID" value="TraesCS1D03G0943200.1.CDS"/>
    <property type="gene ID" value="TraesCS1D03G0943200"/>
</dbReference>
<dbReference type="Gramene" id="TraesJAG1D03G00561940.1">
    <property type="protein sequence ID" value="TraesJAG1D03G00561940.1"/>
    <property type="gene ID" value="TraesJAG1D03G00561940"/>
</dbReference>
<dbReference type="Gramene" id="TraesJUL1D03G00565560.1">
    <property type="protein sequence ID" value="TraesJUL1D03G00565560.1"/>
    <property type="gene ID" value="TraesJUL1D03G00565560"/>
</dbReference>
<dbReference type="Gramene" id="TraesKAR1D01G0340710.1">
    <property type="protein sequence ID" value="cds.TraesKAR1D01G0340710.1"/>
    <property type="gene ID" value="TraesKAR1D01G0340710"/>
</dbReference>
<dbReference type="Gramene" id="TraesLAC1D03G00566420.1">
    <property type="protein sequence ID" value="TraesLAC1D03G00566420.1"/>
    <property type="gene ID" value="TraesLAC1D03G00566420"/>
</dbReference>
<dbReference type="Gramene" id="TraesLDM1D03G00564810.1">
    <property type="protein sequence ID" value="TraesLDM1D03G00564810.1"/>
    <property type="gene ID" value="TraesLDM1D03G00564810"/>
</dbReference>
<dbReference type="Gramene" id="TraesMAC1D03G00562070.1">
    <property type="protein sequence ID" value="TraesMAC1D03G00562070.1"/>
    <property type="gene ID" value="TraesMAC1D03G00562070"/>
</dbReference>
<dbReference type="Gramene" id="TraesNOR1D03G00570550.2">
    <property type="protein sequence ID" value="TraesNOR1D03G00570550.2"/>
    <property type="gene ID" value="TraesNOR1D03G00570550"/>
</dbReference>
<dbReference type="Gramene" id="TraesPARA_EIv1.0_0319500.1">
    <property type="protein sequence ID" value="TraesPARA_EIv1.0_0319500.1.CDS"/>
    <property type="gene ID" value="TraesPARA_EIv1.0_0319500"/>
</dbReference>
<dbReference type="Gramene" id="TraesRN1D0100998000.1">
    <property type="protein sequence ID" value="TraesRN1D0100998000.1"/>
    <property type="gene ID" value="TraesRN1D0100998000"/>
</dbReference>
<dbReference type="Gramene" id="TraesROB_scaffold_057461_01G000700.1">
    <property type="protein sequence ID" value="TraesROB_scaffold_057461_01G000700.1"/>
    <property type="gene ID" value="TraesROB_scaffold_057461_01G000700"/>
</dbReference>
<dbReference type="Gramene" id="TraesSTA1D03G00561620.1">
    <property type="protein sequence ID" value="TraesSTA1D03G00561620.1"/>
    <property type="gene ID" value="TraesSTA1D03G00561620"/>
</dbReference>
<dbReference type="Gramene" id="TraesSYM1D03G00569720.1">
    <property type="protein sequence ID" value="TraesSYM1D03G00569720.1"/>
    <property type="gene ID" value="TraesSYM1D03G00569720"/>
</dbReference>
<dbReference type="Gramene" id="TraesWEE_scaffold_055449_01G000100.1">
    <property type="protein sequence ID" value="TraesWEE_scaffold_055449_01G000100.1"/>
    <property type="gene ID" value="TraesWEE_scaffold_055449_01G000100"/>
</dbReference>
<dbReference type="HOGENOM" id="CLU_132328_0_0_1"/>
<dbReference type="OMA" id="PECASRC"/>
<dbReference type="OrthoDB" id="616097at2759"/>
<dbReference type="Proteomes" id="UP000019116">
    <property type="component" value="Chromosome 1D"/>
</dbReference>
<dbReference type="GO" id="GO:0005576">
    <property type="term" value="C:extracellular region"/>
    <property type="evidence" value="ECO:0007669"/>
    <property type="project" value="UniProtKB-SubCell"/>
</dbReference>
<dbReference type="GO" id="GO:0090729">
    <property type="term" value="F:toxin activity"/>
    <property type="evidence" value="ECO:0007669"/>
    <property type="project" value="UniProtKB-KW"/>
</dbReference>
<dbReference type="GO" id="GO:0006952">
    <property type="term" value="P:defense response"/>
    <property type="evidence" value="ECO:0007669"/>
    <property type="project" value="UniProtKB-KW"/>
</dbReference>
<dbReference type="InterPro" id="IPR001010">
    <property type="entry name" value="Thionin"/>
</dbReference>
<dbReference type="PANTHER" id="PTHR33920:SF9">
    <property type="entry name" value="ALPHA-2-PUROTHIONIN"/>
    <property type="match status" value="1"/>
</dbReference>
<dbReference type="PANTHER" id="PTHR33920">
    <property type="entry name" value="THIONIN-2.1-RELATED"/>
    <property type="match status" value="1"/>
</dbReference>
<comment type="function">
    <text>Thionins are small plant proteins which are toxic to animal cells. They seem to exert their toxic effect at the level of the cell membrane. Their precise function is not known.</text>
</comment>
<comment type="subcellular location">
    <subcellularLocation>
        <location evidence="2">Secreted</location>
    </subcellularLocation>
</comment>
<comment type="tissue specificity">
    <text>Developing endosperm.</text>
</comment>
<comment type="PTM">
    <text evidence="2">Is disulfide-linked.</text>
</comment>
<comment type="similarity">
    <text evidence="2">Belongs to the plant thionin (TC 1.C.44) family.</text>
</comment>
<protein>
    <recommendedName>
        <fullName>Type-5 thionin</fullName>
    </recommendedName>
    <alternativeName>
        <fullName>Type V thionin</fullName>
    </alternativeName>
</protein>
<feature type="signal peptide" evidence="1">
    <location>
        <begin position="1"/>
        <end position="29"/>
    </location>
</feature>
<feature type="chain" id="PRO_0000034132" description="Type-5 thionin">
    <location>
        <begin position="30"/>
        <end position="66"/>
    </location>
</feature>
<feature type="propeptide" id="PRO_0000459419" description="Acidic domain" evidence="2">
    <location>
        <begin position="67"/>
        <end position="131"/>
    </location>
</feature>
<sequence>MGGGQKGLESAIVCLLVLGLVLEQVQVEGVDCGANPFKVACFNSCLLGPSTVFQCADFCACRLPAGLASVRSSDEPNAIEYCSLGCRSSVCDNMINTADNSTEEMKLYVKRCGVACDSFCKGDTLLASLDD</sequence>
<evidence type="ECO:0000255" key="1"/>
<evidence type="ECO:0000305" key="2"/>
<keyword id="KW-1015">Disulfide bond</keyword>
<keyword id="KW-0611">Plant defense</keyword>
<keyword id="KW-1185">Reference proteome</keyword>
<keyword id="KW-0964">Secreted</keyword>
<keyword id="KW-0732">Signal</keyword>
<keyword id="KW-0800">Toxin</keyword>
<accession>Q05806</accession>
<gene>
    <name type="primary">TTHV</name>
</gene>
<organism>
    <name type="scientific">Triticum aestivum</name>
    <name type="common">Wheat</name>
    <dbReference type="NCBI Taxonomy" id="4565"/>
    <lineage>
        <taxon>Eukaryota</taxon>
        <taxon>Viridiplantae</taxon>
        <taxon>Streptophyta</taxon>
        <taxon>Embryophyta</taxon>
        <taxon>Tracheophyta</taxon>
        <taxon>Spermatophyta</taxon>
        <taxon>Magnoliopsida</taxon>
        <taxon>Liliopsida</taxon>
        <taxon>Poales</taxon>
        <taxon>Poaceae</taxon>
        <taxon>BOP clade</taxon>
        <taxon>Pooideae</taxon>
        <taxon>Triticodae</taxon>
        <taxon>Triticeae</taxon>
        <taxon>Triticinae</taxon>
        <taxon>Triticum</taxon>
    </lineage>
</organism>
<name>THN5_WHEAT</name>
<proteinExistence type="evidence at transcript level"/>